<keyword id="KW-0131">Cell cycle</keyword>
<keyword id="KW-0132">Cell division</keyword>
<keyword id="KW-0175">Coiled coil</keyword>
<keyword id="KW-0469">Meiosis</keyword>
<keyword id="KW-1185">Reference proteome</keyword>
<sequence>MEVFTFEKSYLERLKEAEAVLSWEGAVMPASQVRSEWKSYVELKIEPAGWQAIWKIPRVICEDLKLRYPTIVYGYVEQVIFDELKAVFVVTAVQDSDVHLPESNEVSLVELWPTVQQENAALNVDTTAECIDRLRFFYTHVWMPWDKDYDDDRDWVQQHLQARIQLVCDLSKNRLPRPLALHMRTLLAEAKYIQQRLDYLELDLSDAESDDEAVELNDSVAEPARKQSKAGSANGCLNVSSLPVTDLMCLHLRMAIIRSEFEILENPEMRRAYSELQSNSLKRLRCSSGRTRQSEDLLVERNSISHVVTLPGKLQQQLELLKLAQTLVKPESKVQLSNTLQDVLSICQSNDDILLSPGEHTIKFLEHLNDNGSLRGLTQPEAILSPAADLSLLPVVCSSDEDSTLLVIDGDYTLSELVLDCRHVRRGILLRNGTLTMRGCRLLGDGSSSTQEGIVCMPGASVELKSCLIENFAVGVSMRPKSSAELGSVQFKTCKTGLELLEKSASVNLQGSKCSFENCALGILADGFVLGEQRTEKVLVLNKFSELQRYNEDNLLGNCSFYNCKKNVRVFNESGQLLAQRSHQQLLEDELGGENKENIQLV</sequence>
<name>NESD_DROME</name>
<accession>Q9VIP0</accession>
<accession>Q6NP13</accession>
<dbReference type="EMBL" id="AE014134">
    <property type="protein sequence ID" value="AAF53876.1"/>
    <property type="molecule type" value="Genomic_DNA"/>
</dbReference>
<dbReference type="EMBL" id="AE014134">
    <property type="protein sequence ID" value="AAN11067.1"/>
    <property type="molecule type" value="Genomic_DNA"/>
</dbReference>
<dbReference type="EMBL" id="BT011118">
    <property type="protein sequence ID" value="AAR82785.1"/>
    <property type="status" value="ALT_INIT"/>
    <property type="molecule type" value="mRNA"/>
</dbReference>
<dbReference type="RefSeq" id="NP_610025.1">
    <property type="nucleotide sequence ID" value="NM_136181.2"/>
</dbReference>
<dbReference type="RefSeq" id="NP_724247.1">
    <property type="nucleotide sequence ID" value="NM_165320.2"/>
</dbReference>
<dbReference type="SMR" id="Q9VIP0"/>
<dbReference type="FunCoup" id="Q9VIP0">
    <property type="interactions" value="181"/>
</dbReference>
<dbReference type="IntAct" id="Q9VIP0">
    <property type="interactions" value="50"/>
</dbReference>
<dbReference type="STRING" id="7227.FBpp0080867"/>
<dbReference type="PaxDb" id="7227-FBpp0080867"/>
<dbReference type="DNASU" id="35298"/>
<dbReference type="EnsemblMetazoa" id="FBtr0081334">
    <property type="protein sequence ID" value="FBpp0080866"/>
    <property type="gene ID" value="FBgn0032848"/>
</dbReference>
<dbReference type="EnsemblMetazoa" id="FBtr0081335">
    <property type="protein sequence ID" value="FBpp0080867"/>
    <property type="gene ID" value="FBgn0032848"/>
</dbReference>
<dbReference type="GeneID" id="35298"/>
<dbReference type="KEGG" id="dme:Dmel_CG10722"/>
<dbReference type="UCSC" id="CG10722-RA">
    <property type="organism name" value="d. melanogaster"/>
</dbReference>
<dbReference type="AGR" id="FB:FBgn0032848"/>
<dbReference type="CTD" id="35298"/>
<dbReference type="FlyBase" id="FBgn0032848">
    <property type="gene designation" value="nesd"/>
</dbReference>
<dbReference type="VEuPathDB" id="VectorBase:FBgn0032848"/>
<dbReference type="eggNOG" id="ENOG502QUQ2">
    <property type="taxonomic scope" value="Eukaryota"/>
</dbReference>
<dbReference type="GeneTree" id="ENSGT00940000166163"/>
<dbReference type="HOGENOM" id="CLU_022717_1_0_1"/>
<dbReference type="InParanoid" id="Q9VIP0"/>
<dbReference type="OMA" id="FLCESQD"/>
<dbReference type="OrthoDB" id="5978115at2759"/>
<dbReference type="PhylomeDB" id="Q9VIP0"/>
<dbReference type="SignaLink" id="Q9VIP0"/>
<dbReference type="BioGRID-ORCS" id="35298">
    <property type="hits" value="0 hits in 3 CRISPR screens"/>
</dbReference>
<dbReference type="GenomeRNAi" id="35298"/>
<dbReference type="PRO" id="PR:Q9VIP0"/>
<dbReference type="Proteomes" id="UP000000803">
    <property type="component" value="Chromosome 2L"/>
</dbReference>
<dbReference type="Bgee" id="FBgn0032848">
    <property type="expression patterns" value="Expressed in eye disc (Drosophila) and 31 other cell types or tissues"/>
</dbReference>
<dbReference type="GO" id="GO:0097149">
    <property type="term" value="C:centralspindlin complex"/>
    <property type="evidence" value="ECO:0000314"/>
    <property type="project" value="FlyBase"/>
</dbReference>
<dbReference type="GO" id="GO:0035324">
    <property type="term" value="C:female germline ring canal"/>
    <property type="evidence" value="ECO:0000314"/>
    <property type="project" value="FlyBase"/>
</dbReference>
<dbReference type="GO" id="GO:0045169">
    <property type="term" value="C:fusome"/>
    <property type="evidence" value="ECO:0000314"/>
    <property type="project" value="FlyBase"/>
</dbReference>
<dbReference type="GO" id="GO:0045171">
    <property type="term" value="C:intercellular bridge"/>
    <property type="evidence" value="ECO:0000314"/>
    <property type="project" value="FlyBase"/>
</dbReference>
<dbReference type="GO" id="GO:0035323">
    <property type="term" value="C:male germline ring canal"/>
    <property type="evidence" value="ECO:0000314"/>
    <property type="project" value="FlyBase"/>
</dbReference>
<dbReference type="GO" id="GO:0030496">
    <property type="term" value="C:midbody"/>
    <property type="evidence" value="ECO:0000314"/>
    <property type="project" value="FlyBase"/>
</dbReference>
<dbReference type="GO" id="GO:0030246">
    <property type="term" value="F:carbohydrate binding"/>
    <property type="evidence" value="ECO:0000314"/>
    <property type="project" value="FlyBase"/>
</dbReference>
<dbReference type="GO" id="GO:0008335">
    <property type="term" value="P:female germline ring canal stabilization"/>
    <property type="evidence" value="ECO:0000315"/>
    <property type="project" value="FlyBase"/>
</dbReference>
<dbReference type="GO" id="GO:0007112">
    <property type="term" value="P:male meiosis cytokinesis"/>
    <property type="evidence" value="ECO:0000315"/>
    <property type="project" value="FlyBase"/>
</dbReference>
<dbReference type="GO" id="GO:0007283">
    <property type="term" value="P:spermatogenesis"/>
    <property type="evidence" value="ECO:0000318"/>
    <property type="project" value="GO_Central"/>
</dbReference>
<dbReference type="Gene3D" id="2.160.20.10">
    <property type="entry name" value="Single-stranded right-handed beta-helix, Pectin lyase-like"/>
    <property type="match status" value="1"/>
</dbReference>
<dbReference type="InterPro" id="IPR012334">
    <property type="entry name" value="Pectin_lyas_fold"/>
</dbReference>
<dbReference type="InterPro" id="IPR011050">
    <property type="entry name" value="Pectin_lyase_fold/virulence"/>
</dbReference>
<dbReference type="InterPro" id="IPR045140">
    <property type="entry name" value="SHCBP1-like"/>
</dbReference>
<dbReference type="PANTHER" id="PTHR14695:SF4">
    <property type="entry name" value="PROTEIN NESSUN DORMA"/>
    <property type="match status" value="1"/>
</dbReference>
<dbReference type="PANTHER" id="PTHR14695">
    <property type="entry name" value="SHC SH2-DOMAIN BINDING PROTEIN 1-RELATED"/>
    <property type="match status" value="1"/>
</dbReference>
<dbReference type="Pfam" id="PF23762">
    <property type="entry name" value="SHCBP_N"/>
    <property type="match status" value="1"/>
</dbReference>
<dbReference type="SUPFAM" id="SSF51126">
    <property type="entry name" value="Pectin lyase-like"/>
    <property type="match status" value="1"/>
</dbReference>
<feature type="chain" id="PRO_0000437209" description="Protein nessun dorma">
    <location>
        <begin position="1"/>
        <end position="602"/>
    </location>
</feature>
<feature type="coiled-coil region" evidence="1">
    <location>
        <begin position="188"/>
        <end position="208"/>
    </location>
</feature>
<protein>
    <recommendedName>
        <fullName evidence="6">Protein nessun dorma</fullName>
    </recommendedName>
</protein>
<comment type="function">
    <text evidence="2">Required during male meiosis for completion of spermatocyte cytokinesis and possibly also required in female germline cells. Also involved in ring canal formation in male and female germline cells. Not essential for cleavage furrow ingression but is required for contractile ring stability and the attachment of the furrowing membrane to the actomyosin ring in late telophase. Displays high binding affinity for beta-galactosides.</text>
</comment>
<comment type="subunit">
    <text evidence="2">Interacts (via N-terminus) with both members of the centralspindlin complex, Pav and Tum.</text>
</comment>
<comment type="subcellular location">
    <subcellularLocation>
        <location evidence="2">Midbody</location>
    </subcellularLocation>
    <text evidence="2">Detected in the midbody in late cytokinesis. Also detected in ring canals in testis and ovary and in the fusome.</text>
</comment>
<comment type="tissue specificity">
    <text evidence="2">Detected in testis (at protein level). Also expressed in ovary.</text>
</comment>
<comment type="disruption phenotype">
    <text evidence="2">Some mutants display multinucleate spermatids, sterility and asymmetric contraction of the contractile ring with subsequent collapse of the cleavage furrow.</text>
</comment>
<comment type="miscellaneous">
    <text evidence="3">The name 'nessun dorma' is based on Pavarotti's famous aria from the opera Turandot due to the interaction of nesd with Pav.</text>
</comment>
<comment type="sequence caution" evidence="4">
    <conflict type="erroneous initiation">
        <sequence resource="EMBL-CDS" id="AAR82785"/>
    </conflict>
    <text>Extended N-terminus.</text>
</comment>
<proteinExistence type="evidence at protein level"/>
<gene>
    <name evidence="6" type="primary">nesd</name>
    <name evidence="6" type="ORF">CG10722</name>
</gene>
<evidence type="ECO:0000255" key="1"/>
<evidence type="ECO:0000269" key="2">
    <source>
    </source>
</evidence>
<evidence type="ECO:0000303" key="3">
    <source>
    </source>
</evidence>
<evidence type="ECO:0000305" key="4"/>
<evidence type="ECO:0000312" key="5">
    <source>
        <dbReference type="EMBL" id="AAR82785.1"/>
    </source>
</evidence>
<evidence type="ECO:0000312" key="6">
    <source>
        <dbReference type="FlyBase" id="FBgn0032848"/>
    </source>
</evidence>
<evidence type="ECO:0000312" key="7">
    <source>
        <dbReference type="Proteomes" id="UP000000803"/>
    </source>
</evidence>
<reference evidence="7" key="1">
    <citation type="journal article" date="2000" name="Science">
        <title>The genome sequence of Drosophila melanogaster.</title>
        <authorList>
            <person name="Adams M.D."/>
            <person name="Celniker S.E."/>
            <person name="Holt R.A."/>
            <person name="Evans C.A."/>
            <person name="Gocayne J.D."/>
            <person name="Amanatides P.G."/>
            <person name="Scherer S.E."/>
            <person name="Li P.W."/>
            <person name="Hoskins R.A."/>
            <person name="Galle R.F."/>
            <person name="George R.A."/>
            <person name="Lewis S.E."/>
            <person name="Richards S."/>
            <person name="Ashburner M."/>
            <person name="Henderson S.N."/>
            <person name="Sutton G.G."/>
            <person name="Wortman J.R."/>
            <person name="Yandell M.D."/>
            <person name="Zhang Q."/>
            <person name="Chen L.X."/>
            <person name="Brandon R.C."/>
            <person name="Rogers Y.-H.C."/>
            <person name="Blazej R.G."/>
            <person name="Champe M."/>
            <person name="Pfeiffer B.D."/>
            <person name="Wan K.H."/>
            <person name="Doyle C."/>
            <person name="Baxter E.G."/>
            <person name="Helt G."/>
            <person name="Nelson C.R."/>
            <person name="Miklos G.L.G."/>
            <person name="Abril J.F."/>
            <person name="Agbayani A."/>
            <person name="An H.-J."/>
            <person name="Andrews-Pfannkoch C."/>
            <person name="Baldwin D."/>
            <person name="Ballew R.M."/>
            <person name="Basu A."/>
            <person name="Baxendale J."/>
            <person name="Bayraktaroglu L."/>
            <person name="Beasley E.M."/>
            <person name="Beeson K.Y."/>
            <person name="Benos P.V."/>
            <person name="Berman B.P."/>
            <person name="Bhandari D."/>
            <person name="Bolshakov S."/>
            <person name="Borkova D."/>
            <person name="Botchan M.R."/>
            <person name="Bouck J."/>
            <person name="Brokstein P."/>
            <person name="Brottier P."/>
            <person name="Burtis K.C."/>
            <person name="Busam D.A."/>
            <person name="Butler H."/>
            <person name="Cadieu E."/>
            <person name="Center A."/>
            <person name="Chandra I."/>
            <person name="Cherry J.M."/>
            <person name="Cawley S."/>
            <person name="Dahlke C."/>
            <person name="Davenport L.B."/>
            <person name="Davies P."/>
            <person name="de Pablos B."/>
            <person name="Delcher A."/>
            <person name="Deng Z."/>
            <person name="Mays A.D."/>
            <person name="Dew I."/>
            <person name="Dietz S.M."/>
            <person name="Dodson K."/>
            <person name="Doup L.E."/>
            <person name="Downes M."/>
            <person name="Dugan-Rocha S."/>
            <person name="Dunkov B.C."/>
            <person name="Dunn P."/>
            <person name="Durbin K.J."/>
            <person name="Evangelista C.C."/>
            <person name="Ferraz C."/>
            <person name="Ferriera S."/>
            <person name="Fleischmann W."/>
            <person name="Fosler C."/>
            <person name="Gabrielian A.E."/>
            <person name="Garg N.S."/>
            <person name="Gelbart W.M."/>
            <person name="Glasser K."/>
            <person name="Glodek A."/>
            <person name="Gong F."/>
            <person name="Gorrell J.H."/>
            <person name="Gu Z."/>
            <person name="Guan P."/>
            <person name="Harris M."/>
            <person name="Harris N.L."/>
            <person name="Harvey D.A."/>
            <person name="Heiman T.J."/>
            <person name="Hernandez J.R."/>
            <person name="Houck J."/>
            <person name="Hostin D."/>
            <person name="Houston K.A."/>
            <person name="Howland T.J."/>
            <person name="Wei M.-H."/>
            <person name="Ibegwam C."/>
            <person name="Jalali M."/>
            <person name="Kalush F."/>
            <person name="Karpen G.H."/>
            <person name="Ke Z."/>
            <person name="Kennison J.A."/>
            <person name="Ketchum K.A."/>
            <person name="Kimmel B.E."/>
            <person name="Kodira C.D."/>
            <person name="Kraft C.L."/>
            <person name="Kravitz S."/>
            <person name="Kulp D."/>
            <person name="Lai Z."/>
            <person name="Lasko P."/>
            <person name="Lei Y."/>
            <person name="Levitsky A.A."/>
            <person name="Li J.H."/>
            <person name="Li Z."/>
            <person name="Liang Y."/>
            <person name="Lin X."/>
            <person name="Liu X."/>
            <person name="Mattei B."/>
            <person name="McIntosh T.C."/>
            <person name="McLeod M.P."/>
            <person name="McPherson D."/>
            <person name="Merkulov G."/>
            <person name="Milshina N.V."/>
            <person name="Mobarry C."/>
            <person name="Morris J."/>
            <person name="Moshrefi A."/>
            <person name="Mount S.M."/>
            <person name="Moy M."/>
            <person name="Murphy B."/>
            <person name="Murphy L."/>
            <person name="Muzny D.M."/>
            <person name="Nelson D.L."/>
            <person name="Nelson D.R."/>
            <person name="Nelson K.A."/>
            <person name="Nixon K."/>
            <person name="Nusskern D.R."/>
            <person name="Pacleb J.M."/>
            <person name="Palazzolo M."/>
            <person name="Pittman G.S."/>
            <person name="Pan S."/>
            <person name="Pollard J."/>
            <person name="Puri V."/>
            <person name="Reese M.G."/>
            <person name="Reinert K."/>
            <person name="Remington K."/>
            <person name="Saunders R.D.C."/>
            <person name="Scheeler F."/>
            <person name="Shen H."/>
            <person name="Shue B.C."/>
            <person name="Siden-Kiamos I."/>
            <person name="Simpson M."/>
            <person name="Skupski M.P."/>
            <person name="Smith T.J."/>
            <person name="Spier E."/>
            <person name="Spradling A.C."/>
            <person name="Stapleton M."/>
            <person name="Strong R."/>
            <person name="Sun E."/>
            <person name="Svirskas R."/>
            <person name="Tector C."/>
            <person name="Turner R."/>
            <person name="Venter E."/>
            <person name="Wang A.H."/>
            <person name="Wang X."/>
            <person name="Wang Z.-Y."/>
            <person name="Wassarman D.A."/>
            <person name="Weinstock G.M."/>
            <person name="Weissenbach J."/>
            <person name="Williams S.M."/>
            <person name="Woodage T."/>
            <person name="Worley K.C."/>
            <person name="Wu D."/>
            <person name="Yang S."/>
            <person name="Yao Q.A."/>
            <person name="Ye J."/>
            <person name="Yeh R.-F."/>
            <person name="Zaveri J.S."/>
            <person name="Zhan M."/>
            <person name="Zhang G."/>
            <person name="Zhao Q."/>
            <person name="Zheng L."/>
            <person name="Zheng X.H."/>
            <person name="Zhong F.N."/>
            <person name="Zhong W."/>
            <person name="Zhou X."/>
            <person name="Zhu S.C."/>
            <person name="Zhu X."/>
            <person name="Smith H.O."/>
            <person name="Gibbs R.A."/>
            <person name="Myers E.W."/>
            <person name="Rubin G.M."/>
            <person name="Venter J.C."/>
        </authorList>
    </citation>
    <scope>NUCLEOTIDE SEQUENCE [LARGE SCALE GENOMIC DNA]</scope>
    <source>
        <strain evidence="7">Berkeley</strain>
    </source>
</reference>
<reference evidence="7" key="2">
    <citation type="journal article" date="2002" name="Genome Biol.">
        <title>Annotation of the Drosophila melanogaster euchromatic genome: a systematic review.</title>
        <authorList>
            <person name="Misra S."/>
            <person name="Crosby M.A."/>
            <person name="Mungall C.J."/>
            <person name="Matthews B.B."/>
            <person name="Campbell K.S."/>
            <person name="Hradecky P."/>
            <person name="Huang Y."/>
            <person name="Kaminker J.S."/>
            <person name="Millburn G.H."/>
            <person name="Prochnik S.E."/>
            <person name="Smith C.D."/>
            <person name="Tupy J.L."/>
            <person name="Whitfield E.J."/>
            <person name="Bayraktaroglu L."/>
            <person name="Berman B.P."/>
            <person name="Bettencourt B.R."/>
            <person name="Celniker S.E."/>
            <person name="de Grey A.D.N.J."/>
            <person name="Drysdale R.A."/>
            <person name="Harris N.L."/>
            <person name="Richter J."/>
            <person name="Russo S."/>
            <person name="Schroeder A.J."/>
            <person name="Shu S.Q."/>
            <person name="Stapleton M."/>
            <person name="Yamada C."/>
            <person name="Ashburner M."/>
            <person name="Gelbart W.M."/>
            <person name="Rubin G.M."/>
            <person name="Lewis S.E."/>
        </authorList>
    </citation>
    <scope>GENOME REANNOTATION</scope>
    <source>
        <strain evidence="7">Berkeley</strain>
    </source>
</reference>
<reference evidence="5" key="3">
    <citation type="submission" date="2003-12" db="EMBL/GenBank/DDBJ databases">
        <authorList>
            <person name="Stapleton M."/>
            <person name="Brokstein P."/>
            <person name="Hong L."/>
            <person name="Agbayani A."/>
            <person name="Carlson J."/>
            <person name="Champe M."/>
            <person name="Chavez C."/>
            <person name="Dorsett V."/>
            <person name="Dresnek D."/>
            <person name="Farfan D."/>
            <person name="Frise E."/>
            <person name="George R."/>
            <person name="Gonzalez M."/>
            <person name="Guarin H."/>
            <person name="Kronmiller B."/>
            <person name="Li P."/>
            <person name="Liao G."/>
            <person name="Miranda A."/>
            <person name="Mungall C.J."/>
            <person name="Nunoo J."/>
            <person name="Pacleb J."/>
            <person name="Paragas V."/>
            <person name="Park S."/>
            <person name="Patel S."/>
            <person name="Phouanenavong S."/>
            <person name="Wan K."/>
            <person name="Yu C."/>
            <person name="Lewis S.E."/>
            <person name="Rubin G.M."/>
            <person name="Celniker S."/>
        </authorList>
    </citation>
    <scope>NUCLEOTIDE SEQUENCE [LARGE SCALE MRNA]</scope>
    <source>
        <strain evidence="5">Berkeley</strain>
    </source>
</reference>
<reference evidence="4" key="4">
    <citation type="journal article" date="2010" name="J. Cell Biol.">
        <title>Nessun Dorma, a novel centralspindlin partner, is required for cytokinesis in Drosophila spermatocytes.</title>
        <authorList>
            <person name="Montembault E."/>
            <person name="Zhang W."/>
            <person name="Przewloka M.R."/>
            <person name="Archambault V."/>
            <person name="Sevin E.W."/>
            <person name="Laue E.D."/>
            <person name="Glover D.M."/>
            <person name="D'Avino P.P."/>
        </authorList>
    </citation>
    <scope>FUNCTION</scope>
    <scope>INTERACTION WITH PAV AND TUM</scope>
    <scope>SUBCELLULAR LOCATION</scope>
    <scope>TISSUE SPECIFICITY</scope>
    <scope>DISRUPTION PHENOTYPE</scope>
    <scope>IDENTIFICATION BY MASS SPECTROMETRY</scope>
</reference>
<organism evidence="7">
    <name type="scientific">Drosophila melanogaster</name>
    <name type="common">Fruit fly</name>
    <dbReference type="NCBI Taxonomy" id="7227"/>
    <lineage>
        <taxon>Eukaryota</taxon>
        <taxon>Metazoa</taxon>
        <taxon>Ecdysozoa</taxon>
        <taxon>Arthropoda</taxon>
        <taxon>Hexapoda</taxon>
        <taxon>Insecta</taxon>
        <taxon>Pterygota</taxon>
        <taxon>Neoptera</taxon>
        <taxon>Endopterygota</taxon>
        <taxon>Diptera</taxon>
        <taxon>Brachycera</taxon>
        <taxon>Muscomorpha</taxon>
        <taxon>Ephydroidea</taxon>
        <taxon>Drosophilidae</taxon>
        <taxon>Drosophila</taxon>
        <taxon>Sophophora</taxon>
    </lineage>
</organism>